<comment type="function">
    <text>Calmodulin mediates the control of a large number of enzymes, ion channels and other proteins by Ca(2+). Among the enzymes to be stimulated by the calmodulin-Ca(2+) complex are a number of protein kinases and phosphatases.</text>
</comment>
<comment type="miscellaneous">
    <text>This protein has four functional calcium-binding sites.</text>
</comment>
<comment type="similarity">
    <text evidence="3">Belongs to the calmodulin family.</text>
</comment>
<feature type="initiator methionine" description="Removed" evidence="1">
    <location>
        <position position="1"/>
    </location>
</feature>
<feature type="chain" id="PRO_0000198285" description="Calmodulin">
    <location>
        <begin position="2"/>
        <end position="149"/>
    </location>
</feature>
<feature type="domain" description="EF-hand 1" evidence="2">
    <location>
        <begin position="8"/>
        <end position="43"/>
    </location>
</feature>
<feature type="domain" description="EF-hand 2" evidence="2">
    <location>
        <begin position="44"/>
        <end position="79"/>
    </location>
</feature>
<feature type="domain" description="EF-hand 3" evidence="2">
    <location>
        <begin position="81"/>
        <end position="116"/>
    </location>
</feature>
<feature type="domain" description="EF-hand 4" evidence="2">
    <location>
        <begin position="117"/>
        <end position="149"/>
    </location>
</feature>
<feature type="binding site" evidence="2">
    <location>
        <position position="21"/>
    </location>
    <ligand>
        <name>Ca(2+)</name>
        <dbReference type="ChEBI" id="CHEBI:29108"/>
        <label>1</label>
    </ligand>
</feature>
<feature type="binding site" evidence="2">
    <location>
        <position position="23"/>
    </location>
    <ligand>
        <name>Ca(2+)</name>
        <dbReference type="ChEBI" id="CHEBI:29108"/>
        <label>1</label>
    </ligand>
</feature>
<feature type="binding site" evidence="2">
    <location>
        <position position="25"/>
    </location>
    <ligand>
        <name>Ca(2+)</name>
        <dbReference type="ChEBI" id="CHEBI:29108"/>
        <label>1</label>
    </ligand>
</feature>
<feature type="binding site" evidence="2">
    <location>
        <position position="27"/>
    </location>
    <ligand>
        <name>Ca(2+)</name>
        <dbReference type="ChEBI" id="CHEBI:29108"/>
        <label>1</label>
    </ligand>
</feature>
<feature type="binding site" evidence="2">
    <location>
        <position position="32"/>
    </location>
    <ligand>
        <name>Ca(2+)</name>
        <dbReference type="ChEBI" id="CHEBI:29108"/>
        <label>1</label>
    </ligand>
</feature>
<feature type="binding site" evidence="2">
    <location>
        <position position="57"/>
    </location>
    <ligand>
        <name>Ca(2+)</name>
        <dbReference type="ChEBI" id="CHEBI:29108"/>
        <label>2</label>
    </ligand>
</feature>
<feature type="binding site" evidence="2">
    <location>
        <position position="59"/>
    </location>
    <ligand>
        <name>Ca(2+)</name>
        <dbReference type="ChEBI" id="CHEBI:29108"/>
        <label>2</label>
    </ligand>
</feature>
<feature type="binding site" evidence="2">
    <location>
        <position position="61"/>
    </location>
    <ligand>
        <name>Ca(2+)</name>
        <dbReference type="ChEBI" id="CHEBI:29108"/>
        <label>2</label>
    </ligand>
</feature>
<feature type="binding site" evidence="2">
    <location>
        <position position="63"/>
    </location>
    <ligand>
        <name>Ca(2+)</name>
        <dbReference type="ChEBI" id="CHEBI:29108"/>
        <label>2</label>
    </ligand>
</feature>
<feature type="binding site" evidence="2">
    <location>
        <position position="68"/>
    </location>
    <ligand>
        <name>Ca(2+)</name>
        <dbReference type="ChEBI" id="CHEBI:29108"/>
        <label>2</label>
    </ligand>
</feature>
<feature type="binding site" evidence="2">
    <location>
        <position position="94"/>
    </location>
    <ligand>
        <name>Ca(2+)</name>
        <dbReference type="ChEBI" id="CHEBI:29108"/>
        <label>3</label>
    </ligand>
</feature>
<feature type="binding site" evidence="2">
    <location>
        <position position="96"/>
    </location>
    <ligand>
        <name>Ca(2+)</name>
        <dbReference type="ChEBI" id="CHEBI:29108"/>
        <label>3</label>
    </ligand>
</feature>
<feature type="binding site" evidence="2">
    <location>
        <position position="98"/>
    </location>
    <ligand>
        <name>Ca(2+)</name>
        <dbReference type="ChEBI" id="CHEBI:29108"/>
        <label>3</label>
    </ligand>
</feature>
<feature type="binding site" evidence="2">
    <location>
        <position position="105"/>
    </location>
    <ligand>
        <name>Ca(2+)</name>
        <dbReference type="ChEBI" id="CHEBI:29108"/>
        <label>3</label>
    </ligand>
</feature>
<feature type="binding site" evidence="2">
    <location>
        <position position="130"/>
    </location>
    <ligand>
        <name>Ca(2+)</name>
        <dbReference type="ChEBI" id="CHEBI:29108"/>
        <label>4</label>
    </ligand>
</feature>
<feature type="binding site" evidence="2">
    <location>
        <position position="132"/>
    </location>
    <ligand>
        <name>Ca(2+)</name>
        <dbReference type="ChEBI" id="CHEBI:29108"/>
        <label>4</label>
    </ligand>
</feature>
<feature type="binding site" evidence="2">
    <location>
        <position position="134"/>
    </location>
    <ligand>
        <name>Ca(2+)</name>
        <dbReference type="ChEBI" id="CHEBI:29108"/>
        <label>4</label>
    </ligand>
</feature>
<feature type="binding site" evidence="2">
    <location>
        <position position="136"/>
    </location>
    <ligand>
        <name>Ca(2+)</name>
        <dbReference type="ChEBI" id="CHEBI:29108"/>
        <label>4</label>
    </ligand>
</feature>
<feature type="binding site" evidence="2">
    <location>
        <position position="141"/>
    </location>
    <ligand>
        <name>Ca(2+)</name>
        <dbReference type="ChEBI" id="CHEBI:29108"/>
        <label>4</label>
    </ligand>
</feature>
<feature type="modified residue" description="N-acetylalanine" evidence="1">
    <location>
        <position position="2"/>
    </location>
</feature>
<feature type="modified residue" description="N6,N6,N6-trimethyllysine" evidence="1">
    <location>
        <position position="116"/>
    </location>
</feature>
<dbReference type="EMBL" id="U83402">
    <property type="protein sequence ID" value="AAB46588.1"/>
    <property type="molecule type" value="mRNA"/>
</dbReference>
<dbReference type="EMBL" id="AF108889">
    <property type="protein sequence ID" value="AAF65511.1"/>
    <property type="molecule type" value="mRNA"/>
</dbReference>
<dbReference type="RefSeq" id="XP_016544026.1">
    <property type="nucleotide sequence ID" value="XM_016688540.1"/>
</dbReference>
<dbReference type="SMR" id="P93087"/>
<dbReference type="EnsemblPlants" id="PHT63478">
    <property type="protein sequence ID" value="PHT63478"/>
    <property type="gene ID" value="T459_32702"/>
</dbReference>
<dbReference type="EnsemblPlants" id="PHT68892">
    <property type="protein sequence ID" value="PHT68892"/>
    <property type="gene ID" value="T459_28379"/>
</dbReference>
<dbReference type="Gramene" id="PHT63478">
    <property type="protein sequence ID" value="PHT63478"/>
    <property type="gene ID" value="T459_32702"/>
</dbReference>
<dbReference type="Gramene" id="PHT68892">
    <property type="protein sequence ID" value="PHT68892"/>
    <property type="gene ID" value="T459_28379"/>
</dbReference>
<dbReference type="OMA" id="ARKMKEC"/>
<dbReference type="OrthoDB" id="26525at2759"/>
<dbReference type="GO" id="GO:0005509">
    <property type="term" value="F:calcium ion binding"/>
    <property type="evidence" value="ECO:0007669"/>
    <property type="project" value="InterPro"/>
</dbReference>
<dbReference type="CDD" id="cd00051">
    <property type="entry name" value="EFh"/>
    <property type="match status" value="2"/>
</dbReference>
<dbReference type="FunFam" id="1.10.238.10:FF:000034">
    <property type="entry name" value="Calmodulin"/>
    <property type="match status" value="1"/>
</dbReference>
<dbReference type="FunFam" id="1.10.238.10:FF:000042">
    <property type="entry name" value="Calmodulin"/>
    <property type="match status" value="1"/>
</dbReference>
<dbReference type="Gene3D" id="1.10.238.10">
    <property type="entry name" value="EF-hand"/>
    <property type="match status" value="3"/>
</dbReference>
<dbReference type="InterPro" id="IPR050230">
    <property type="entry name" value="CALM/Myosin/TropC-like"/>
</dbReference>
<dbReference type="InterPro" id="IPR011992">
    <property type="entry name" value="EF-hand-dom_pair"/>
</dbReference>
<dbReference type="InterPro" id="IPR018247">
    <property type="entry name" value="EF_Hand_1_Ca_BS"/>
</dbReference>
<dbReference type="InterPro" id="IPR002048">
    <property type="entry name" value="EF_hand_dom"/>
</dbReference>
<dbReference type="PANTHER" id="PTHR23048:SF53">
    <property type="entry name" value="CALMODULIN"/>
    <property type="match status" value="1"/>
</dbReference>
<dbReference type="PANTHER" id="PTHR23048">
    <property type="entry name" value="MYOSIN LIGHT CHAIN 1, 3"/>
    <property type="match status" value="1"/>
</dbReference>
<dbReference type="Pfam" id="PF13499">
    <property type="entry name" value="EF-hand_7"/>
    <property type="match status" value="2"/>
</dbReference>
<dbReference type="SMART" id="SM00054">
    <property type="entry name" value="EFh"/>
    <property type="match status" value="4"/>
</dbReference>
<dbReference type="SUPFAM" id="SSF47473">
    <property type="entry name" value="EF-hand"/>
    <property type="match status" value="1"/>
</dbReference>
<dbReference type="PROSITE" id="PS00018">
    <property type="entry name" value="EF_HAND_1"/>
    <property type="match status" value="4"/>
</dbReference>
<dbReference type="PROSITE" id="PS50222">
    <property type="entry name" value="EF_HAND_2"/>
    <property type="match status" value="4"/>
</dbReference>
<keyword id="KW-0007">Acetylation</keyword>
<keyword id="KW-0106">Calcium</keyword>
<keyword id="KW-0479">Metal-binding</keyword>
<keyword id="KW-0488">Methylation</keyword>
<keyword id="KW-0677">Repeat</keyword>
<gene>
    <name type="primary">CCM1</name>
</gene>
<name>CALM_CAPAN</name>
<organism>
    <name type="scientific">Capsicum annuum</name>
    <name type="common">Capsicum pepper</name>
    <dbReference type="NCBI Taxonomy" id="4072"/>
    <lineage>
        <taxon>Eukaryota</taxon>
        <taxon>Viridiplantae</taxon>
        <taxon>Streptophyta</taxon>
        <taxon>Embryophyta</taxon>
        <taxon>Tracheophyta</taxon>
        <taxon>Spermatophyta</taxon>
        <taxon>Magnoliopsida</taxon>
        <taxon>eudicotyledons</taxon>
        <taxon>Gunneridae</taxon>
        <taxon>Pentapetalae</taxon>
        <taxon>asterids</taxon>
        <taxon>lamiids</taxon>
        <taxon>Solanales</taxon>
        <taxon>Solanaceae</taxon>
        <taxon>Solanoideae</taxon>
        <taxon>Capsiceae</taxon>
        <taxon>Capsicum</taxon>
    </lineage>
</organism>
<evidence type="ECO:0000250" key="1"/>
<evidence type="ECO:0000255" key="2">
    <source>
        <dbReference type="PROSITE-ProRule" id="PRU00448"/>
    </source>
</evidence>
<evidence type="ECO:0000305" key="3"/>
<proteinExistence type="evidence at transcript level"/>
<sequence length="149" mass="16834">MADQLTDDQISEFKEAFSLFDKDGDGCITTKELGTVMRSLGQNPTEAELQDMINEVDADGNGTIDFPEFLNLMARKMKDTDSEEELKEAFRVFDKDQNGFISAAELRHVMTNLGEKLTDEEVDEMIREADVDGDGQINYDEFVKVMMAK</sequence>
<accession>P93087</accession>
<reference key="1">
    <citation type="journal article" date="1996" name="Mol. Cells">
        <title>Isolation and characterization of a hot pepper calmodulin cDNA clone.</title>
        <authorList>
            <person name="Kwak H.-J."/>
            <person name="Kim S.-R."/>
            <person name="Kim S.-A."/>
        </authorList>
    </citation>
    <scope>NUCLEOTIDE SEQUENCE [MRNA]</scope>
    <source>
        <strain>cv. Happy Dry</strain>
    </source>
</reference>
<reference key="2">
    <citation type="submission" date="1998-11" db="EMBL/GenBank/DDBJ databases">
        <authorList>
            <person name="Kim T.H."/>
            <person name="Lee J.Y."/>
            <person name="Ryu T.H."/>
            <person name="Shin J.S."/>
            <person name="Hwang Y.S."/>
        </authorList>
    </citation>
    <scope>NUCLEOTIDE SEQUENCE [MRNA]</scope>
    <source>
        <tissue>Root</tissue>
    </source>
</reference>
<protein>
    <recommendedName>
        <fullName>Calmodulin</fullName>
        <shortName>CaM</shortName>
    </recommendedName>
</protein>